<feature type="chain" id="PRO_0000096154" description="Probable manganese catalase">
    <location>
        <begin position="1"/>
        <end position="225"/>
    </location>
</feature>
<feature type="region of interest" description="Disordered" evidence="3">
    <location>
        <begin position="204"/>
        <end position="225"/>
    </location>
</feature>
<feature type="compositionally biased region" description="Polar residues" evidence="3">
    <location>
        <begin position="213"/>
        <end position="225"/>
    </location>
</feature>
<feature type="binding site" evidence="2">
    <location>
        <position position="37"/>
    </location>
    <ligand>
        <name>Mn(2+)</name>
        <dbReference type="ChEBI" id="CHEBI:29035"/>
        <label>1</label>
    </ligand>
</feature>
<feature type="binding site" evidence="2">
    <location>
        <position position="58"/>
    </location>
    <ligand>
        <name>Ca(2+)</name>
        <dbReference type="ChEBI" id="CHEBI:29108"/>
    </ligand>
</feature>
<feature type="binding site" evidence="2">
    <location>
        <position position="62"/>
    </location>
    <ligand>
        <name>Ca(2+)</name>
        <dbReference type="ChEBI" id="CHEBI:29108"/>
    </ligand>
</feature>
<feature type="binding site" evidence="2">
    <location>
        <position position="67"/>
    </location>
    <ligand>
        <name>Mn(2+)</name>
        <dbReference type="ChEBI" id="CHEBI:29035"/>
        <label>1</label>
    </ligand>
</feature>
<feature type="binding site" evidence="2">
    <location>
        <position position="67"/>
    </location>
    <ligand>
        <name>Mn(2+)</name>
        <dbReference type="ChEBI" id="CHEBI:29035"/>
        <label>2</label>
    </ligand>
</feature>
<feature type="binding site" evidence="2">
    <location>
        <position position="70"/>
    </location>
    <ligand>
        <name>Mn(2+)</name>
        <dbReference type="ChEBI" id="CHEBI:29035"/>
        <label>1</label>
    </ligand>
</feature>
<feature type="binding site" evidence="2">
    <location>
        <position position="138"/>
    </location>
    <ligand>
        <name>Mn(2+)</name>
        <dbReference type="ChEBI" id="CHEBI:29035"/>
        <label>2</label>
    </ligand>
</feature>
<feature type="binding site" evidence="2">
    <location>
        <position position="171"/>
    </location>
    <ligand>
        <name>Mn(2+)</name>
        <dbReference type="ChEBI" id="CHEBI:29035"/>
        <label>2</label>
    </ligand>
</feature>
<feature type="binding site" evidence="2">
    <location>
        <position position="204"/>
    </location>
    <ligand>
        <name>Ca(2+)</name>
        <dbReference type="ChEBI" id="CHEBI:29108"/>
    </ligand>
</feature>
<reference key="1">
    <citation type="journal article" date="2001" name="J. Bacteriol.">
        <title>Genome sequence and comparative analysis of the solvent-producing bacterium Clostridium acetobutylicum.</title>
        <authorList>
            <person name="Noelling J."/>
            <person name="Breton G."/>
            <person name="Omelchenko M.V."/>
            <person name="Makarova K.S."/>
            <person name="Zeng Q."/>
            <person name="Gibson R."/>
            <person name="Lee H.M."/>
            <person name="Dubois J."/>
            <person name="Qiu D."/>
            <person name="Hitti J."/>
            <person name="Wolf Y.I."/>
            <person name="Tatusov R.L."/>
            <person name="Sabathe F."/>
            <person name="Doucette-Stamm L.A."/>
            <person name="Soucaille P."/>
            <person name="Daly M.J."/>
            <person name="Bennett G.N."/>
            <person name="Koonin E.V."/>
            <person name="Smith D.R."/>
        </authorList>
    </citation>
    <scope>NUCLEOTIDE SEQUENCE [LARGE SCALE GENOMIC DNA]</scope>
    <source>
        <strain>ATCC 824 / DSM 792 / JCM 1419 / IAM 19013 / LMG 5710 / NBRC 13948 / NRRL B-527 / VKM B-1787 / 2291 / W</strain>
    </source>
</reference>
<gene>
    <name type="ordered locus">CA_C2800</name>
</gene>
<keyword id="KW-0106">Calcium</keyword>
<keyword id="KW-0464">Manganese</keyword>
<keyword id="KW-0479">Metal-binding</keyword>
<keyword id="KW-0560">Oxidoreductase</keyword>
<keyword id="KW-0575">Peroxidase</keyword>
<keyword id="KW-1185">Reference proteome</keyword>
<dbReference type="EC" id="1.11.1.6" evidence="1"/>
<dbReference type="EMBL" id="AE001437">
    <property type="protein sequence ID" value="AAK80744.1"/>
    <property type="molecule type" value="Genomic_DNA"/>
</dbReference>
<dbReference type="PIR" id="E97244">
    <property type="entry name" value="E97244"/>
</dbReference>
<dbReference type="RefSeq" id="NP_349404.1">
    <property type="nucleotide sequence ID" value="NC_003030.1"/>
</dbReference>
<dbReference type="RefSeq" id="WP_010966085.1">
    <property type="nucleotide sequence ID" value="NC_003030.1"/>
</dbReference>
<dbReference type="SMR" id="Q97FE0"/>
<dbReference type="STRING" id="272562.CA_C2800"/>
<dbReference type="PeroxiBase" id="6192">
    <property type="entry name" value="CacMnCat"/>
</dbReference>
<dbReference type="KEGG" id="cac:CA_C2800"/>
<dbReference type="PATRIC" id="fig|272562.8.peg.2987"/>
<dbReference type="eggNOG" id="COG3546">
    <property type="taxonomic scope" value="Bacteria"/>
</dbReference>
<dbReference type="HOGENOM" id="CLU_057467_0_1_9"/>
<dbReference type="OrthoDB" id="9800585at2"/>
<dbReference type="Proteomes" id="UP000000814">
    <property type="component" value="Chromosome"/>
</dbReference>
<dbReference type="GO" id="GO:0004096">
    <property type="term" value="F:catalase activity"/>
    <property type="evidence" value="ECO:0007669"/>
    <property type="project" value="UniProtKB-EC"/>
</dbReference>
<dbReference type="GO" id="GO:0046872">
    <property type="term" value="F:metal ion binding"/>
    <property type="evidence" value="ECO:0007669"/>
    <property type="project" value="UniProtKB-KW"/>
</dbReference>
<dbReference type="CDD" id="cd01051">
    <property type="entry name" value="Mn_catalase"/>
    <property type="match status" value="1"/>
</dbReference>
<dbReference type="Gene3D" id="1.20.1260.10">
    <property type="match status" value="1"/>
</dbReference>
<dbReference type="InterPro" id="IPR012347">
    <property type="entry name" value="Ferritin-like"/>
</dbReference>
<dbReference type="InterPro" id="IPR009078">
    <property type="entry name" value="Ferritin-like_SF"/>
</dbReference>
<dbReference type="InterPro" id="IPR007760">
    <property type="entry name" value="Mn_catalase"/>
</dbReference>
<dbReference type="InterPro" id="IPR039377">
    <property type="entry name" value="Mn_catalase_dom"/>
</dbReference>
<dbReference type="Pfam" id="PF05067">
    <property type="entry name" value="Mn_catalase"/>
    <property type="match status" value="1"/>
</dbReference>
<dbReference type="SUPFAM" id="SSF47240">
    <property type="entry name" value="Ferritin-like"/>
    <property type="match status" value="1"/>
</dbReference>
<accession>Q97FE0</accession>
<protein>
    <recommendedName>
        <fullName evidence="1">Probable manganese catalase</fullName>
        <ecNumber evidence="1">1.11.1.6</ecNumber>
    </recommendedName>
</protein>
<name>MCAT_CLOAB</name>
<proteinExistence type="inferred from homology"/>
<sequence>MFKHEKQLLNGMQVKVERENPQYAVLMQEQLGGANGELKAAMQYLSQSFRVKDQALKDLFLDIGTEELSHMEIVAETINLLNGHSVNYEVVGVGEVESHVLSGLTPFLVNSSGEPWTANYVSVTGDIVADLLSNIASEQRAKVVYEYLYRQINDKEVRRTIDFLLNREEAHNALFREALNKVKNEGSNKDFGVTEDSKLYFDLSTPGRYVQDPNPTEPSFSNPRR</sequence>
<organism>
    <name type="scientific">Clostridium acetobutylicum (strain ATCC 824 / DSM 792 / JCM 1419 / IAM 19013 / LMG 5710 / NBRC 13948 / NRRL B-527 / VKM B-1787 / 2291 / W)</name>
    <dbReference type="NCBI Taxonomy" id="272562"/>
    <lineage>
        <taxon>Bacteria</taxon>
        <taxon>Bacillati</taxon>
        <taxon>Bacillota</taxon>
        <taxon>Clostridia</taxon>
        <taxon>Eubacteriales</taxon>
        <taxon>Clostridiaceae</taxon>
        <taxon>Clostridium</taxon>
    </lineage>
</organism>
<evidence type="ECO:0000250" key="1">
    <source>
        <dbReference type="UniProtKB" id="A0A7R7ZDZ6"/>
    </source>
</evidence>
<evidence type="ECO:0000250" key="2">
    <source>
        <dbReference type="UniProtKB" id="P60355"/>
    </source>
</evidence>
<evidence type="ECO:0000256" key="3">
    <source>
        <dbReference type="SAM" id="MobiDB-lite"/>
    </source>
</evidence>
<evidence type="ECO:0000305" key="4"/>
<comment type="function">
    <text evidence="1">Catalyzes the decomposition of hydrogen peroxide into water and oxygen.</text>
</comment>
<comment type="catalytic activity">
    <reaction evidence="1">
        <text>2 H2O2 = O2 + 2 H2O</text>
        <dbReference type="Rhea" id="RHEA:20309"/>
        <dbReference type="ChEBI" id="CHEBI:15377"/>
        <dbReference type="ChEBI" id="CHEBI:15379"/>
        <dbReference type="ChEBI" id="CHEBI:16240"/>
        <dbReference type="EC" id="1.11.1.6"/>
    </reaction>
</comment>
<comment type="cofactor">
    <cofactor evidence="2">
        <name>Ca(2+)</name>
        <dbReference type="ChEBI" id="CHEBI:29108"/>
    </cofactor>
    <text evidence="2">Binds 1 Ca(2+) ion per subunit.</text>
</comment>
<comment type="cofactor">
    <cofactor evidence="2">
        <name>Mn(2+)</name>
        <dbReference type="ChEBI" id="CHEBI:29035"/>
    </cofactor>
    <text evidence="2">Binds 2 manganese ions per subunit.</text>
</comment>
<comment type="similarity">
    <text evidence="4">Belongs to the manganese catalase family.</text>
</comment>